<accession>Q5W264</accession>
<sequence>MNDVTTETYETLKQSVLHTFAQLTGYNVSELSLTSHLENDLGVDSIALAEIAVSLSRQFQLNTPLLIQDINTIKDALDGILQREFQLSEKVEPAAIALSGDADLWLGNLVRQIFASHSGYDVNALALDAEIESDLGIDSVSVASAQGELFNTLQLNSETIIANCNTLSALKQCLAARLVQEKGQDWFEQRGRGQSDSAIDHDADTTAEVTPPTATPVAINAEIGDPRTMRDFVGIEHPDIFHKAREFHLFYQDKKKRQLYFYGMPLETPCKNRAVMFDEATGQHREFLMFGSNSYLGLSNHPEIIHAIQDAASLYGATNTGCRIIAGSNVLHLELERKLAKLKGRDDCIVYPSGYSANLGCISALTSRHDLVFTDAINHMSIQDGCKLAGAQRKIYNHSLTSLEKSLAKYADHPGGKLIVTDGVFSMHGDIVDLPRLMKLAERYGARVLVDDAHSTGVLGKTGAGTSEHFNMKGQVDLELGTMSKALSGLGGYVCGDGDVVEYLRFYSNSYVFAATIPAPVAAGVIASIDVMLREPERLAKLWDNIYYFRTRLLNAGFDLENSDSAIIPIVVGDDAKTLFFGRAVRARGMFCQTVVFPGVSVGDARLRISITSEHTREDLDEAYAILVASALEVGVPVNASAHQEENASVAEA</sequence>
<dbReference type="EC" id="2.3.2.-" evidence="9 10"/>
<dbReference type="EMBL" id="AJ833001">
    <property type="protein sequence ID" value="CAH55636.1"/>
    <property type="molecule type" value="Genomic_DNA"/>
</dbReference>
<dbReference type="RefSeq" id="WP_021014646.1">
    <property type="nucleotide sequence ID" value="NZ_CP025084.1"/>
</dbReference>
<dbReference type="PDB" id="5Y08">
    <property type="method" value="NMR"/>
    <property type="chains" value="A=1-188"/>
</dbReference>
<dbReference type="PDBsum" id="5Y08"/>
<dbReference type="SASBDB" id="Q5W264"/>
<dbReference type="SMR" id="Q5W264"/>
<dbReference type="STRING" id="104623.Ser39006_01376"/>
<dbReference type="KEGG" id="ag:CAH55636"/>
<dbReference type="eggNOG" id="COG0156">
    <property type="taxonomic scope" value="Bacteria"/>
</dbReference>
<dbReference type="OrthoDB" id="9807157at2"/>
<dbReference type="UniPathway" id="UPA01072"/>
<dbReference type="GO" id="GO:0016020">
    <property type="term" value="C:membrane"/>
    <property type="evidence" value="ECO:0007669"/>
    <property type="project" value="UniProtKB-SubCell"/>
</dbReference>
<dbReference type="GO" id="GO:0070280">
    <property type="term" value="F:pyridoxal binding"/>
    <property type="evidence" value="ECO:0000314"/>
    <property type="project" value="UniProtKB"/>
</dbReference>
<dbReference type="GO" id="GO:0030170">
    <property type="term" value="F:pyridoxal phosphate binding"/>
    <property type="evidence" value="ECO:0007669"/>
    <property type="project" value="InterPro"/>
</dbReference>
<dbReference type="GO" id="GO:0008483">
    <property type="term" value="F:transaminase activity"/>
    <property type="evidence" value="ECO:0007669"/>
    <property type="project" value="UniProtKB-KW"/>
</dbReference>
<dbReference type="GO" id="GO:0017000">
    <property type="term" value="P:antibiotic biosynthetic process"/>
    <property type="evidence" value="ECO:0000315"/>
    <property type="project" value="UniProtKB"/>
</dbReference>
<dbReference type="CDD" id="cd06454">
    <property type="entry name" value="KBL_like"/>
    <property type="match status" value="1"/>
</dbReference>
<dbReference type="Gene3D" id="1.10.1200.10">
    <property type="entry name" value="ACP-like"/>
    <property type="match status" value="2"/>
</dbReference>
<dbReference type="Gene3D" id="3.90.1150.10">
    <property type="entry name" value="Aspartate Aminotransferase, domain 1"/>
    <property type="match status" value="1"/>
</dbReference>
<dbReference type="Gene3D" id="3.40.640.10">
    <property type="entry name" value="Type I PLP-dependent aspartate aminotransferase-like (Major domain)"/>
    <property type="match status" value="1"/>
</dbReference>
<dbReference type="InterPro" id="IPR036736">
    <property type="entry name" value="ACP-like_sf"/>
</dbReference>
<dbReference type="InterPro" id="IPR001917">
    <property type="entry name" value="Aminotrans_II_pyridoxalP_BS"/>
</dbReference>
<dbReference type="InterPro" id="IPR004839">
    <property type="entry name" value="Aminotransferase_I/II_large"/>
</dbReference>
<dbReference type="InterPro" id="IPR050087">
    <property type="entry name" value="AON_synthase_class-II"/>
</dbReference>
<dbReference type="InterPro" id="IPR009081">
    <property type="entry name" value="PP-bd_ACP"/>
</dbReference>
<dbReference type="InterPro" id="IPR006162">
    <property type="entry name" value="Ppantetheine_attach_site"/>
</dbReference>
<dbReference type="InterPro" id="IPR015424">
    <property type="entry name" value="PyrdxlP-dep_Trfase"/>
</dbReference>
<dbReference type="InterPro" id="IPR015421">
    <property type="entry name" value="PyrdxlP-dep_Trfase_major"/>
</dbReference>
<dbReference type="InterPro" id="IPR015422">
    <property type="entry name" value="PyrdxlP-dep_Trfase_small"/>
</dbReference>
<dbReference type="PANTHER" id="PTHR13693">
    <property type="entry name" value="CLASS II AMINOTRANSFERASE/8-AMINO-7-OXONONANOATE SYNTHASE"/>
    <property type="match status" value="1"/>
</dbReference>
<dbReference type="PANTHER" id="PTHR13693:SF3">
    <property type="entry name" value="LD36009P"/>
    <property type="match status" value="1"/>
</dbReference>
<dbReference type="Pfam" id="PF00155">
    <property type="entry name" value="Aminotran_1_2"/>
    <property type="match status" value="1"/>
</dbReference>
<dbReference type="Pfam" id="PF00550">
    <property type="entry name" value="PP-binding"/>
    <property type="match status" value="1"/>
</dbReference>
<dbReference type="SUPFAM" id="SSF47336">
    <property type="entry name" value="ACP-like"/>
    <property type="match status" value="2"/>
</dbReference>
<dbReference type="SUPFAM" id="SSF53383">
    <property type="entry name" value="PLP-dependent transferases"/>
    <property type="match status" value="1"/>
</dbReference>
<dbReference type="PROSITE" id="PS00599">
    <property type="entry name" value="AA_TRANSFER_CLASS_2"/>
    <property type="match status" value="1"/>
</dbReference>
<dbReference type="PROSITE" id="PS50075">
    <property type="entry name" value="CARRIER"/>
    <property type="match status" value="1"/>
</dbReference>
<dbReference type="PROSITE" id="PS00012">
    <property type="entry name" value="PHOSPHOPANTETHEINE"/>
    <property type="match status" value="1"/>
</dbReference>
<evidence type="ECO:0000250" key="1">
    <source>
        <dbReference type="UniProtKB" id="P12998"/>
    </source>
</evidence>
<evidence type="ECO:0000255" key="2"/>
<evidence type="ECO:0000255" key="3">
    <source>
        <dbReference type="PROSITE-ProRule" id="PRU00258"/>
    </source>
</evidence>
<evidence type="ECO:0000269" key="4">
    <source>
    </source>
</evidence>
<evidence type="ECO:0000269" key="5">
    <source>
    </source>
</evidence>
<evidence type="ECO:0000303" key="6">
    <source>
    </source>
</evidence>
<evidence type="ECO:0000303" key="7">
    <source>
    </source>
</evidence>
<evidence type="ECO:0000305" key="8"/>
<evidence type="ECO:0000305" key="9">
    <source>
    </source>
</evidence>
<evidence type="ECO:0000305" key="10">
    <source>
    </source>
</evidence>
<evidence type="ECO:0007829" key="11">
    <source>
        <dbReference type="PDB" id="5Y08"/>
    </source>
</evidence>
<proteinExistence type="evidence at protein level"/>
<gene>
    <name evidence="6" type="primary">pigH</name>
</gene>
<reference key="1">
    <citation type="journal article" date="2004" name="Microbiology">
        <title>The Serratia gene cluster encoding biosynthesis of the red antibiotic, prodigiosin, shows species- and strain-dependent genome context variation.</title>
        <authorList>
            <person name="Harris A.K."/>
            <person name="Williamson N.R."/>
            <person name="Slater H."/>
            <person name="Cox A."/>
            <person name="Abbasi S."/>
            <person name="Foulds I."/>
            <person name="Simonsen H.T."/>
            <person name="Leeper F.J."/>
            <person name="Salmond G.P."/>
        </authorList>
    </citation>
    <scope>NUCLEOTIDE SEQUENCE [GENOMIC DNA]</scope>
    <source>
        <strain>ATCC 39006 / SC 11482</strain>
    </source>
</reference>
<reference key="2">
    <citation type="journal article" date="2005" name="Mol. Microbiol.">
        <title>Biosynthesis of the red antibiotic, prodigiosin, in Serratia: identification of a novel 2-methyl-3-n-amyl-pyrrole (MAP) assembly pathway, definition of the terminal condensing enzyme, and implications for undecylprodigiosin biosynthesis in Streptomyces.</title>
        <authorList>
            <person name="Williamson N.R."/>
            <person name="Simonsen H.T."/>
            <person name="Ahmed R.A."/>
            <person name="Goldet G."/>
            <person name="Slater H."/>
            <person name="Woodley L."/>
            <person name="Leeper F.J."/>
            <person name="Salmond G.P."/>
        </authorList>
    </citation>
    <scope>FUNCTION</scope>
    <scope>CATALYTIC ACTIVITY</scope>
    <scope>DISRUPTION PHENOTYPE</scope>
    <scope>PATHWAY</scope>
    <source>
        <strain>ATCC 39006 / SC 11482</strain>
    </source>
</reference>
<reference key="3">
    <citation type="journal article" date="2006" name="J. Am. Chem. Soc.">
        <title>Protein assembly line components in prodigiosin biosynthesis: characterization of PigA,G,H,I,J.</title>
        <authorList>
            <person name="Garneau-Tsodikova S."/>
            <person name="Dorrestein P.C."/>
            <person name="Kelleher N.L."/>
            <person name="Walsh C.T."/>
        </authorList>
    </citation>
    <scope>FUNCTION</scope>
    <scope>CATALYTIC ACTIVITY</scope>
    <scope>MUTAGENESIS OF SER-45 AND SER-139</scope>
    <scope>COFACTOR</scope>
    <scope>PATHWAY</scope>
    <scope>PHOSPHOPANTETHEINYLATION AT SER-45</scope>
    <source>
        <strain>ATCC 39006 / SC 11482</strain>
    </source>
</reference>
<feature type="chain" id="PRO_0000436246" description="4-hydroxy-2,2'-bipyrrole-5-methanol synthase PigH">
    <location>
        <begin position="1"/>
        <end position="653"/>
    </location>
</feature>
<feature type="transmembrane region" description="Helical" evidence="2">
    <location>
        <begin position="512"/>
        <end position="532"/>
    </location>
</feature>
<feature type="domain" description="Carrier" evidence="3">
    <location>
        <begin position="7"/>
        <end position="84"/>
    </location>
</feature>
<feature type="binding site" evidence="1">
    <location>
        <begin position="354"/>
        <end position="355"/>
    </location>
    <ligand>
        <name>pyridoxal 5'-phosphate</name>
        <dbReference type="ChEBI" id="CHEBI:597326"/>
    </ligand>
</feature>
<feature type="binding site" evidence="1">
    <location>
        <position position="379"/>
    </location>
    <ligand>
        <name>substrate</name>
    </ligand>
</feature>
<feature type="binding site" evidence="1">
    <location>
        <position position="426"/>
    </location>
    <ligand>
        <name>pyridoxal 5'-phosphate</name>
        <dbReference type="ChEBI" id="CHEBI:597326"/>
    </ligand>
</feature>
<feature type="binding site" evidence="1">
    <location>
        <position position="454"/>
    </location>
    <ligand>
        <name>pyridoxal 5'-phosphate</name>
        <dbReference type="ChEBI" id="CHEBI:597326"/>
    </ligand>
</feature>
<feature type="binding site" evidence="1">
    <location>
        <position position="482"/>
    </location>
    <ligand>
        <name>pyridoxal 5'-phosphate</name>
        <dbReference type="ChEBI" id="CHEBI:597326"/>
    </ligand>
</feature>
<feature type="modified residue" description="O-(pantetheine 4'-phosphoryl)serine" evidence="3 10">
    <location>
        <position position="45"/>
    </location>
</feature>
<feature type="modified residue" description="N6-(pyridoxal phosphate)lysine" evidence="1">
    <location>
        <position position="485"/>
    </location>
</feature>
<feature type="mutagenesis site" description="The pyrrolyl-beta-ketoacyl moiety is formed." evidence="5">
    <original>S</original>
    <variation>A</variation>
    <location>
        <position position="45"/>
    </location>
</feature>
<feature type="mutagenesis site" description="The pyrrolyl-beta-ketoacyl moiety is formed." evidence="5">
    <original>S</original>
    <variation>A</variation>
    <location>
        <position position="139"/>
    </location>
</feature>
<feature type="strand" evidence="11">
    <location>
        <begin position="2"/>
        <end position="4"/>
    </location>
</feature>
<feature type="helix" evidence="11">
    <location>
        <begin position="6"/>
        <end position="24"/>
    </location>
</feature>
<feature type="helix" evidence="11">
    <location>
        <begin position="28"/>
        <end position="30"/>
    </location>
</feature>
<feature type="helix" evidence="11">
    <location>
        <begin position="37"/>
        <end position="41"/>
    </location>
</feature>
<feature type="helix" evidence="11">
    <location>
        <begin position="45"/>
        <end position="58"/>
    </location>
</feature>
<feature type="helix" evidence="11">
    <location>
        <begin position="73"/>
        <end position="80"/>
    </location>
</feature>
<feature type="turn" evidence="11">
    <location>
        <begin position="81"/>
        <end position="83"/>
    </location>
</feature>
<feature type="helix" evidence="11">
    <location>
        <begin position="100"/>
        <end position="118"/>
    </location>
</feature>
<feature type="turn" evidence="11">
    <location>
        <begin position="122"/>
        <end position="124"/>
    </location>
</feature>
<feature type="turn" evidence="11">
    <location>
        <begin position="131"/>
        <end position="134"/>
    </location>
</feature>
<feature type="helix" evidence="11">
    <location>
        <begin position="139"/>
        <end position="152"/>
    </location>
</feature>
<feature type="helix" evidence="11">
    <location>
        <begin position="167"/>
        <end position="181"/>
    </location>
</feature>
<feature type="helix" evidence="11">
    <location>
        <begin position="185"/>
        <end position="188"/>
    </location>
</feature>
<name>PIGH_SERS3</name>
<keyword id="KW-0002">3D-structure</keyword>
<keyword id="KW-0032">Aminotransferase</keyword>
<keyword id="KW-0045">Antibiotic biosynthesis</keyword>
<keyword id="KW-0472">Membrane</keyword>
<keyword id="KW-0596">Phosphopantetheine</keyword>
<keyword id="KW-0597">Phosphoprotein</keyword>
<keyword id="KW-0663">Pyridoxal phosphate</keyword>
<keyword id="KW-0808">Transferase</keyword>
<keyword id="KW-0812">Transmembrane</keyword>
<keyword id="KW-1133">Transmembrane helix</keyword>
<organism>
    <name type="scientific">Serratia sp. (strain ATCC 39006)</name>
    <name type="common">Prodigiosinella confusarubida</name>
    <dbReference type="NCBI Taxonomy" id="104623"/>
    <lineage>
        <taxon>Bacteria</taxon>
        <taxon>Pseudomonadati</taxon>
        <taxon>Pseudomonadota</taxon>
        <taxon>Gammaproteobacteria</taxon>
        <taxon>Enterobacterales</taxon>
        <taxon>Pectobacteriaceae</taxon>
        <taxon>Prodigiosinella</taxon>
    </lineage>
</organism>
<protein>
    <recommendedName>
        <fullName evidence="8">4-hydroxy-2,2'-bipyrrole-5-methanol synthase PigH</fullName>
        <shortName evidence="8">HBM synthase</shortName>
        <ecNumber evidence="9 10">2.3.2.-</ecNumber>
    </recommendedName>
    <alternativeName>
        <fullName evidence="7">Aminotransferase PigH</fullName>
    </alternativeName>
</protein>
<comment type="function">
    <text evidence="4 5">Involved in the biosynthesis of 4-methoxy-2,2'-bipyrrole-5-carbaldehyde (MBC), one of the terminal products involved in the biosynthesis of the red antibiotic prodigiosin (Pig). Carrier of the L-malonyl group (malonyl-S-PigH), which is decarboxylated by PigJ to yield a C2 carbanion acetyl-S-PigH. Then the pyrrolyl group of pyrrolyl-S-cysteinyl PigJ intermediate is captured by the C2 carbanion acetyl-S-PigH to yield the pyrrolyl-beta-ketoacyl-S-PigH. In the last step, PigH catalyzes the decarboxylative condensation between the pyrrolyl-beta-ketoacyl (pyrrolyl-beta-ketoacyl-S-PigH) and L-serine to yield 4-hydroxy-2,2'-bipyrrole-5-methanol (HBM).</text>
</comment>
<comment type="cofactor">
    <cofactor evidence="5">
        <name>pyridoxal 5'-phosphate</name>
        <dbReference type="ChEBI" id="CHEBI:597326"/>
    </cofactor>
</comment>
<comment type="pathway">
    <text evidence="9 10">Antibiotic biosynthesis; prodigiosin biosynthesis.</text>
</comment>
<comment type="subcellular location">
    <subcellularLocation>
        <location evidence="2">Membrane</location>
        <topology evidence="2">Single-pass membrane protein</topology>
    </subcellularLocation>
</comment>
<comment type="disruption phenotype">
    <text evidence="4">Cells with an insertion in the ACP domain of this gene show an white phenotype and produce 2-methyl-3-n-amyl-pyrrole (MAP) but not prodigiosin. Cells with an insertion in the aminotransferase domain of this gene show a light pink phenotype and produce less prodigiosin than the wild-type.</text>
</comment>